<keyword id="KW-0328">Glycosyltransferase</keyword>
<keyword id="KW-1185">Reference proteome</keyword>
<keyword id="KW-0808">Transferase</keyword>
<sequence length="103" mass="11648">MTKFENVTVVKKANIYDGGKVTSRTVEFADGTRKTLGIMMPGEYTFNTAEAEIMEMMSGELDIRLPNEDWKTLNTPESFNVPANSSFDLKIRTVTDYCCSYIK</sequence>
<evidence type="ECO:0000255" key="1">
    <source>
        <dbReference type="HAMAP-Rule" id="MF_01537"/>
    </source>
</evidence>
<name>PPNP_SULDN</name>
<feature type="chain" id="PRO_0000298734" description="Pyrimidine/purine nucleoside phosphorylase">
    <location>
        <begin position="1"/>
        <end position="103"/>
    </location>
</feature>
<organism>
    <name type="scientific">Sulfurimonas denitrificans (strain ATCC 33889 / DSM 1251)</name>
    <name type="common">Thiomicrospira denitrificans (strain ATCC 33889 / DSM 1251)</name>
    <dbReference type="NCBI Taxonomy" id="326298"/>
    <lineage>
        <taxon>Bacteria</taxon>
        <taxon>Pseudomonadati</taxon>
        <taxon>Campylobacterota</taxon>
        <taxon>Epsilonproteobacteria</taxon>
        <taxon>Campylobacterales</taxon>
        <taxon>Sulfurimonadaceae</taxon>
        <taxon>Sulfurimonas</taxon>
    </lineage>
</organism>
<reference key="1">
    <citation type="journal article" date="2008" name="Appl. Environ. Microbiol.">
        <title>Genome of the epsilonproteobacterial chemolithoautotroph Sulfurimonas denitrificans.</title>
        <authorList>
            <person name="Sievert S.M."/>
            <person name="Scott K.M."/>
            <person name="Klotz M.G."/>
            <person name="Chain P.S.G."/>
            <person name="Hauser L.J."/>
            <person name="Hemp J."/>
            <person name="Huegler M."/>
            <person name="Land M."/>
            <person name="Lapidus A."/>
            <person name="Larimer F.W."/>
            <person name="Lucas S."/>
            <person name="Malfatti S.A."/>
            <person name="Meyer F."/>
            <person name="Paulsen I.T."/>
            <person name="Ren Q."/>
            <person name="Simon J."/>
            <person name="Bailey K."/>
            <person name="Diaz E."/>
            <person name="Fitzpatrick K.A."/>
            <person name="Glover B."/>
            <person name="Gwatney N."/>
            <person name="Korajkic A."/>
            <person name="Long A."/>
            <person name="Mobberley J.M."/>
            <person name="Pantry S.N."/>
            <person name="Pazder G."/>
            <person name="Peterson S."/>
            <person name="Quintanilla J.D."/>
            <person name="Sprinkle R."/>
            <person name="Stephens J."/>
            <person name="Thomas P."/>
            <person name="Vaughn R."/>
            <person name="Weber M.J."/>
            <person name="Wooten L.L."/>
        </authorList>
    </citation>
    <scope>NUCLEOTIDE SEQUENCE [LARGE SCALE GENOMIC DNA]</scope>
    <source>
        <strain>ATCC 33889 / DSM 1251</strain>
    </source>
</reference>
<gene>
    <name evidence="1" type="primary">ppnP</name>
    <name type="ordered locus">Suden_2102</name>
</gene>
<accession>Q30NQ5</accession>
<proteinExistence type="inferred from homology"/>
<protein>
    <recommendedName>
        <fullName evidence="1">Pyrimidine/purine nucleoside phosphorylase</fullName>
        <ecNumber evidence="1">2.4.2.1</ecNumber>
        <ecNumber evidence="1">2.4.2.2</ecNumber>
    </recommendedName>
    <alternativeName>
        <fullName evidence="1">Adenosine phosphorylase</fullName>
    </alternativeName>
    <alternativeName>
        <fullName evidence="1">Cytidine phosphorylase</fullName>
    </alternativeName>
    <alternativeName>
        <fullName evidence="1">Guanosine phosphorylase</fullName>
    </alternativeName>
    <alternativeName>
        <fullName evidence="1">Inosine phosphorylase</fullName>
    </alternativeName>
    <alternativeName>
        <fullName evidence="1">Thymidine phosphorylase</fullName>
    </alternativeName>
    <alternativeName>
        <fullName evidence="1">Uridine phosphorylase</fullName>
    </alternativeName>
    <alternativeName>
        <fullName evidence="1">Xanthosine phosphorylase</fullName>
    </alternativeName>
</protein>
<comment type="function">
    <text evidence="1">Catalyzes the phosphorolysis of diverse nucleosides, yielding D-ribose 1-phosphate and the respective free bases. Can use uridine, adenosine, guanosine, cytidine, thymidine, inosine and xanthosine as substrates. Also catalyzes the reverse reactions.</text>
</comment>
<comment type="catalytic activity">
    <reaction evidence="1">
        <text>a purine D-ribonucleoside + phosphate = a purine nucleobase + alpha-D-ribose 1-phosphate</text>
        <dbReference type="Rhea" id="RHEA:19805"/>
        <dbReference type="ChEBI" id="CHEBI:26386"/>
        <dbReference type="ChEBI" id="CHEBI:43474"/>
        <dbReference type="ChEBI" id="CHEBI:57720"/>
        <dbReference type="ChEBI" id="CHEBI:142355"/>
        <dbReference type="EC" id="2.4.2.1"/>
    </reaction>
</comment>
<comment type="catalytic activity">
    <reaction evidence="1">
        <text>adenosine + phosphate = alpha-D-ribose 1-phosphate + adenine</text>
        <dbReference type="Rhea" id="RHEA:27642"/>
        <dbReference type="ChEBI" id="CHEBI:16335"/>
        <dbReference type="ChEBI" id="CHEBI:16708"/>
        <dbReference type="ChEBI" id="CHEBI:43474"/>
        <dbReference type="ChEBI" id="CHEBI:57720"/>
        <dbReference type="EC" id="2.4.2.1"/>
    </reaction>
</comment>
<comment type="catalytic activity">
    <reaction evidence="1">
        <text>cytidine + phosphate = cytosine + alpha-D-ribose 1-phosphate</text>
        <dbReference type="Rhea" id="RHEA:52540"/>
        <dbReference type="ChEBI" id="CHEBI:16040"/>
        <dbReference type="ChEBI" id="CHEBI:17562"/>
        <dbReference type="ChEBI" id="CHEBI:43474"/>
        <dbReference type="ChEBI" id="CHEBI:57720"/>
        <dbReference type="EC" id="2.4.2.2"/>
    </reaction>
</comment>
<comment type="catalytic activity">
    <reaction evidence="1">
        <text>guanosine + phosphate = alpha-D-ribose 1-phosphate + guanine</text>
        <dbReference type="Rhea" id="RHEA:13233"/>
        <dbReference type="ChEBI" id="CHEBI:16235"/>
        <dbReference type="ChEBI" id="CHEBI:16750"/>
        <dbReference type="ChEBI" id="CHEBI:43474"/>
        <dbReference type="ChEBI" id="CHEBI:57720"/>
        <dbReference type="EC" id="2.4.2.1"/>
    </reaction>
</comment>
<comment type="catalytic activity">
    <reaction evidence="1">
        <text>inosine + phosphate = alpha-D-ribose 1-phosphate + hypoxanthine</text>
        <dbReference type="Rhea" id="RHEA:27646"/>
        <dbReference type="ChEBI" id="CHEBI:17368"/>
        <dbReference type="ChEBI" id="CHEBI:17596"/>
        <dbReference type="ChEBI" id="CHEBI:43474"/>
        <dbReference type="ChEBI" id="CHEBI:57720"/>
        <dbReference type="EC" id="2.4.2.1"/>
    </reaction>
</comment>
<comment type="catalytic activity">
    <reaction evidence="1">
        <text>thymidine + phosphate = 2-deoxy-alpha-D-ribose 1-phosphate + thymine</text>
        <dbReference type="Rhea" id="RHEA:16037"/>
        <dbReference type="ChEBI" id="CHEBI:17748"/>
        <dbReference type="ChEBI" id="CHEBI:17821"/>
        <dbReference type="ChEBI" id="CHEBI:43474"/>
        <dbReference type="ChEBI" id="CHEBI:57259"/>
        <dbReference type="EC" id="2.4.2.2"/>
    </reaction>
</comment>
<comment type="catalytic activity">
    <reaction evidence="1">
        <text>uridine + phosphate = alpha-D-ribose 1-phosphate + uracil</text>
        <dbReference type="Rhea" id="RHEA:24388"/>
        <dbReference type="ChEBI" id="CHEBI:16704"/>
        <dbReference type="ChEBI" id="CHEBI:17568"/>
        <dbReference type="ChEBI" id="CHEBI:43474"/>
        <dbReference type="ChEBI" id="CHEBI:57720"/>
        <dbReference type="EC" id="2.4.2.2"/>
    </reaction>
</comment>
<comment type="catalytic activity">
    <reaction evidence="1">
        <text>xanthosine + phosphate = alpha-D-ribose 1-phosphate + xanthine</text>
        <dbReference type="Rhea" id="RHEA:27638"/>
        <dbReference type="ChEBI" id="CHEBI:17712"/>
        <dbReference type="ChEBI" id="CHEBI:18107"/>
        <dbReference type="ChEBI" id="CHEBI:43474"/>
        <dbReference type="ChEBI" id="CHEBI:57720"/>
        <dbReference type="EC" id="2.4.2.1"/>
    </reaction>
</comment>
<comment type="similarity">
    <text evidence="1">Belongs to the nucleoside phosphorylase PpnP family.</text>
</comment>
<dbReference type="EC" id="2.4.2.1" evidence="1"/>
<dbReference type="EC" id="2.4.2.2" evidence="1"/>
<dbReference type="EMBL" id="CP000153">
    <property type="protein sequence ID" value="ABB45376.1"/>
    <property type="molecule type" value="Genomic_DNA"/>
</dbReference>
<dbReference type="RefSeq" id="WP_011373716.1">
    <property type="nucleotide sequence ID" value="NC_007575.1"/>
</dbReference>
<dbReference type="SMR" id="Q30NQ5"/>
<dbReference type="STRING" id="326298.Suden_2102"/>
<dbReference type="KEGG" id="tdn:Suden_2102"/>
<dbReference type="eggNOG" id="COG3123">
    <property type="taxonomic scope" value="Bacteria"/>
</dbReference>
<dbReference type="HOGENOM" id="CLU_157874_1_0_7"/>
<dbReference type="OrthoDB" id="9793848at2"/>
<dbReference type="Proteomes" id="UP000002714">
    <property type="component" value="Chromosome"/>
</dbReference>
<dbReference type="GO" id="GO:0005829">
    <property type="term" value="C:cytosol"/>
    <property type="evidence" value="ECO:0007669"/>
    <property type="project" value="TreeGrafter"/>
</dbReference>
<dbReference type="GO" id="GO:0047975">
    <property type="term" value="F:guanosine phosphorylase activity"/>
    <property type="evidence" value="ECO:0007669"/>
    <property type="project" value="UniProtKB-EC"/>
</dbReference>
<dbReference type="GO" id="GO:0004731">
    <property type="term" value="F:purine-nucleoside phosphorylase activity"/>
    <property type="evidence" value="ECO:0007669"/>
    <property type="project" value="UniProtKB-UniRule"/>
</dbReference>
<dbReference type="GO" id="GO:0009032">
    <property type="term" value="F:thymidine phosphorylase activity"/>
    <property type="evidence" value="ECO:0007669"/>
    <property type="project" value="UniProtKB-EC"/>
</dbReference>
<dbReference type="GO" id="GO:0004850">
    <property type="term" value="F:uridine phosphorylase activity"/>
    <property type="evidence" value="ECO:0007669"/>
    <property type="project" value="UniProtKB-EC"/>
</dbReference>
<dbReference type="CDD" id="cd20296">
    <property type="entry name" value="cupin_PpnP-like"/>
    <property type="match status" value="1"/>
</dbReference>
<dbReference type="FunFam" id="2.60.120.10:FF:000016">
    <property type="entry name" value="Pyrimidine/purine nucleoside phosphorylase"/>
    <property type="match status" value="1"/>
</dbReference>
<dbReference type="Gene3D" id="2.60.120.10">
    <property type="entry name" value="Jelly Rolls"/>
    <property type="match status" value="1"/>
</dbReference>
<dbReference type="HAMAP" id="MF_01537">
    <property type="entry name" value="Nucleos_phosphorylase_PpnP"/>
    <property type="match status" value="1"/>
</dbReference>
<dbReference type="InterPro" id="IPR009664">
    <property type="entry name" value="Ppnp"/>
</dbReference>
<dbReference type="InterPro" id="IPR014710">
    <property type="entry name" value="RmlC-like_jellyroll"/>
</dbReference>
<dbReference type="InterPro" id="IPR011051">
    <property type="entry name" value="RmlC_Cupin_sf"/>
</dbReference>
<dbReference type="PANTHER" id="PTHR36540">
    <property type="entry name" value="PYRIMIDINE/PURINE NUCLEOSIDE PHOSPHORYLASE"/>
    <property type="match status" value="1"/>
</dbReference>
<dbReference type="PANTHER" id="PTHR36540:SF1">
    <property type="entry name" value="PYRIMIDINE_PURINE NUCLEOSIDE PHOSPHORYLASE"/>
    <property type="match status" value="1"/>
</dbReference>
<dbReference type="Pfam" id="PF06865">
    <property type="entry name" value="Ppnp"/>
    <property type="match status" value="1"/>
</dbReference>
<dbReference type="SUPFAM" id="SSF51182">
    <property type="entry name" value="RmlC-like cupins"/>
    <property type="match status" value="1"/>
</dbReference>